<reference key="1">
    <citation type="journal article" date="2003" name="Nature">
        <title>The DNA sequence and analysis of human chromosome 6.</title>
        <authorList>
            <person name="Mungall A.J."/>
            <person name="Palmer S.A."/>
            <person name="Sims S.K."/>
            <person name="Edwards C.A."/>
            <person name="Ashurst J.L."/>
            <person name="Wilming L."/>
            <person name="Jones M.C."/>
            <person name="Horton R."/>
            <person name="Hunt S.E."/>
            <person name="Scott C.E."/>
            <person name="Gilbert J.G.R."/>
            <person name="Clamp M.E."/>
            <person name="Bethel G."/>
            <person name="Milne S."/>
            <person name="Ainscough R."/>
            <person name="Almeida J.P."/>
            <person name="Ambrose K.D."/>
            <person name="Andrews T.D."/>
            <person name="Ashwell R.I.S."/>
            <person name="Babbage A.K."/>
            <person name="Bagguley C.L."/>
            <person name="Bailey J."/>
            <person name="Banerjee R."/>
            <person name="Barker D.J."/>
            <person name="Barlow K.F."/>
            <person name="Bates K."/>
            <person name="Beare D.M."/>
            <person name="Beasley H."/>
            <person name="Beasley O."/>
            <person name="Bird C.P."/>
            <person name="Blakey S.E."/>
            <person name="Bray-Allen S."/>
            <person name="Brook J."/>
            <person name="Brown A.J."/>
            <person name="Brown J.Y."/>
            <person name="Burford D.C."/>
            <person name="Burrill W."/>
            <person name="Burton J."/>
            <person name="Carder C."/>
            <person name="Carter N.P."/>
            <person name="Chapman J.C."/>
            <person name="Clark S.Y."/>
            <person name="Clark G."/>
            <person name="Clee C.M."/>
            <person name="Clegg S."/>
            <person name="Cobley V."/>
            <person name="Collier R.E."/>
            <person name="Collins J.E."/>
            <person name="Colman L.K."/>
            <person name="Corby N.R."/>
            <person name="Coville G.J."/>
            <person name="Culley K.M."/>
            <person name="Dhami P."/>
            <person name="Davies J."/>
            <person name="Dunn M."/>
            <person name="Earthrowl M.E."/>
            <person name="Ellington A.E."/>
            <person name="Evans K.A."/>
            <person name="Faulkner L."/>
            <person name="Francis M.D."/>
            <person name="Frankish A."/>
            <person name="Frankland J."/>
            <person name="French L."/>
            <person name="Garner P."/>
            <person name="Garnett J."/>
            <person name="Ghori M.J."/>
            <person name="Gilby L.M."/>
            <person name="Gillson C.J."/>
            <person name="Glithero R.J."/>
            <person name="Grafham D.V."/>
            <person name="Grant M."/>
            <person name="Gribble S."/>
            <person name="Griffiths C."/>
            <person name="Griffiths M.N.D."/>
            <person name="Hall R."/>
            <person name="Halls K.S."/>
            <person name="Hammond S."/>
            <person name="Harley J.L."/>
            <person name="Hart E.A."/>
            <person name="Heath P.D."/>
            <person name="Heathcott R."/>
            <person name="Holmes S.J."/>
            <person name="Howden P.J."/>
            <person name="Howe K.L."/>
            <person name="Howell G.R."/>
            <person name="Huckle E."/>
            <person name="Humphray S.J."/>
            <person name="Humphries M.D."/>
            <person name="Hunt A.R."/>
            <person name="Johnson C.M."/>
            <person name="Joy A.A."/>
            <person name="Kay M."/>
            <person name="Keenan S.J."/>
            <person name="Kimberley A.M."/>
            <person name="King A."/>
            <person name="Laird G.K."/>
            <person name="Langford C."/>
            <person name="Lawlor S."/>
            <person name="Leongamornlert D.A."/>
            <person name="Leversha M."/>
            <person name="Lloyd C.R."/>
            <person name="Lloyd D.M."/>
            <person name="Loveland J.E."/>
            <person name="Lovell J."/>
            <person name="Martin S."/>
            <person name="Mashreghi-Mohammadi M."/>
            <person name="Maslen G.L."/>
            <person name="Matthews L."/>
            <person name="McCann O.T."/>
            <person name="McLaren S.J."/>
            <person name="McLay K."/>
            <person name="McMurray A."/>
            <person name="Moore M.J.F."/>
            <person name="Mullikin J.C."/>
            <person name="Niblett D."/>
            <person name="Nickerson T."/>
            <person name="Novik K.L."/>
            <person name="Oliver K."/>
            <person name="Overton-Larty E.K."/>
            <person name="Parker A."/>
            <person name="Patel R."/>
            <person name="Pearce A.V."/>
            <person name="Peck A.I."/>
            <person name="Phillimore B.J.C.T."/>
            <person name="Phillips S."/>
            <person name="Plumb R.W."/>
            <person name="Porter K.M."/>
            <person name="Ramsey Y."/>
            <person name="Ranby S.A."/>
            <person name="Rice C.M."/>
            <person name="Ross M.T."/>
            <person name="Searle S.M."/>
            <person name="Sehra H.K."/>
            <person name="Sheridan E."/>
            <person name="Skuce C.D."/>
            <person name="Smith S."/>
            <person name="Smith M."/>
            <person name="Spraggon L."/>
            <person name="Squares S.L."/>
            <person name="Steward C.A."/>
            <person name="Sycamore N."/>
            <person name="Tamlyn-Hall G."/>
            <person name="Tester J."/>
            <person name="Theaker A.J."/>
            <person name="Thomas D.W."/>
            <person name="Thorpe A."/>
            <person name="Tracey A."/>
            <person name="Tromans A."/>
            <person name="Tubby B."/>
            <person name="Wall M."/>
            <person name="Wallis J.M."/>
            <person name="West A.P."/>
            <person name="White S.S."/>
            <person name="Whitehead S.L."/>
            <person name="Whittaker H."/>
            <person name="Wild A."/>
            <person name="Willey D.J."/>
            <person name="Wilmer T.E."/>
            <person name="Wood J.M."/>
            <person name="Wray P.W."/>
            <person name="Wyatt J.C."/>
            <person name="Young L."/>
            <person name="Younger R.M."/>
            <person name="Bentley D.R."/>
            <person name="Coulson A."/>
            <person name="Durbin R.M."/>
            <person name="Hubbard T."/>
            <person name="Sulston J.E."/>
            <person name="Dunham I."/>
            <person name="Rogers J."/>
            <person name="Beck S."/>
        </authorList>
    </citation>
    <scope>NUCLEOTIDE SEQUENCE [LARGE SCALE GENOMIC DNA]</scope>
</reference>
<reference key="2">
    <citation type="journal article" date="2012" name="BMC Genomics">
        <title>Personal receptor repertoires: olfaction as a model.</title>
        <authorList>
            <person name="Olender T."/>
            <person name="Waszak S.M."/>
            <person name="Viavant M."/>
            <person name="Khen M."/>
            <person name="Ben-Asher E."/>
            <person name="Reyes A."/>
            <person name="Nativ N."/>
            <person name="Wysocki C.J."/>
            <person name="Ge D."/>
            <person name="Lancet D."/>
        </authorList>
    </citation>
    <scope>POLYMORPHISM</scope>
</reference>
<comment type="function">
    <text evidence="4">Odorant receptor.</text>
</comment>
<comment type="subcellular location">
    <subcellularLocation>
        <location evidence="4">Cell membrane</location>
        <topology evidence="1">Multi-pass membrane protein</topology>
    </subcellularLocation>
</comment>
<comment type="polymorphism">
    <text evidence="3">Segregating pseudogene, locus showing both intact and pseudogene forms in the population. A deletion of 16 nucleotides at position Ser-186 in the gene coding for this protein is responsible for functional diversity, producing a pseudogene.</text>
</comment>
<comment type="similarity">
    <text evidence="2">Belongs to the G-protein coupled receptor 1 family.</text>
</comment>
<comment type="online information" name="Human Olfactory Receptor Data Exploratorium (HORDE)">
    <link uri="http://genome.weizmann.ac.il/horde/card/index/symbol:OR12D1P"/>
</comment>
<evidence type="ECO:0000255" key="1"/>
<evidence type="ECO:0000255" key="2">
    <source>
        <dbReference type="PROSITE-ProRule" id="PRU00521"/>
    </source>
</evidence>
<evidence type="ECO:0000269" key="3">
    <source>
    </source>
</evidence>
<evidence type="ECO:0000305" key="4"/>
<name>O12D1_HUMAN</name>
<proteinExistence type="inferred from homology"/>
<gene>
    <name type="primary">OR12D1</name>
    <name type="synonym">OR12D1P</name>
</gene>
<sequence length="320" mass="36420">MLNTTSVTEFLLLGVTDIQELQPFLFVVFLTIYFISVAGNGAILMIVISDPRLHSPMYFFLGNLSCLDICYSSVTLPKMLQNFLSAHKAISFLGCISQLHFFHFLGSTEAMLLAVMAFDRFVAICKPLRYTVIMNPQLCTQMAITIWMIGFFHALLHSLMTSRLNFCGSNRIYHFFCDVKPLLKLACGNTELNQWLLSTVTGTIAMGPFFLTLLSYFYIITHLFFKTHSFSMLRKALSTCASHFMVVILLYAPVLFTYIHHASGTSMDQDRITAIMYTVVTPVLNPLIYTLRNKEVKGAFNRAMKRWLWPKEILKNSSEA</sequence>
<feature type="chain" id="PRO_0000435483" description="Olfactory receptor 12D1">
    <location>
        <begin position="1"/>
        <end position="320"/>
    </location>
</feature>
<feature type="topological domain" description="Extracellular" evidence="4">
    <location>
        <begin position="1"/>
        <end position="23"/>
    </location>
</feature>
<feature type="transmembrane region" description="Helical; Name=1" evidence="1">
    <location>
        <begin position="24"/>
        <end position="44"/>
    </location>
</feature>
<feature type="topological domain" description="Cytoplasmic" evidence="4">
    <location>
        <begin position="45"/>
        <end position="55"/>
    </location>
</feature>
<feature type="transmembrane region" description="Helical; Name=2" evidence="1">
    <location>
        <begin position="56"/>
        <end position="76"/>
    </location>
</feature>
<feature type="topological domain" description="Extracellular" evidence="4">
    <location>
        <begin position="77"/>
        <end position="97"/>
    </location>
</feature>
<feature type="transmembrane region" description="Helical; Name=3" evidence="1">
    <location>
        <begin position="98"/>
        <end position="118"/>
    </location>
</feature>
<feature type="topological domain" description="Cytoplasmic" evidence="4">
    <location>
        <begin position="119"/>
        <end position="141"/>
    </location>
</feature>
<feature type="transmembrane region" description="Helical; Name=4" evidence="1">
    <location>
        <begin position="142"/>
        <end position="162"/>
    </location>
</feature>
<feature type="topological domain" description="Extracellular" evidence="4">
    <location>
        <begin position="163"/>
        <end position="203"/>
    </location>
</feature>
<feature type="transmembrane region" description="Helical; Name=5" evidence="1">
    <location>
        <begin position="204"/>
        <end position="224"/>
    </location>
</feature>
<feature type="topological domain" description="Cytoplasmic" evidence="4">
    <location>
        <begin position="225"/>
        <end position="238"/>
    </location>
</feature>
<feature type="transmembrane region" description="Helical; Name=6" evidence="1">
    <location>
        <begin position="239"/>
        <end position="259"/>
    </location>
</feature>
<feature type="topological domain" description="Extracellular" evidence="4">
    <location>
        <begin position="260"/>
        <end position="270"/>
    </location>
</feature>
<feature type="transmembrane region" description="Helical; Name=7" evidence="1">
    <location>
        <begin position="271"/>
        <end position="291"/>
    </location>
</feature>
<feature type="topological domain" description="Cytoplasmic" evidence="4">
    <location>
        <begin position="292"/>
        <end position="320"/>
    </location>
</feature>
<feature type="glycosylation site" description="N-linked (GlcNAc...) asparagine" evidence="1">
    <location>
        <position position="3"/>
    </location>
</feature>
<feature type="disulfide bond" evidence="2">
    <location>
        <begin position="95"/>
        <end position="177"/>
    </location>
</feature>
<keyword id="KW-1003">Cell membrane</keyword>
<keyword id="KW-1015">Disulfide bond</keyword>
<keyword id="KW-0297">G-protein coupled receptor</keyword>
<keyword id="KW-0325">Glycoprotein</keyword>
<keyword id="KW-0472">Membrane</keyword>
<keyword id="KW-0552">Olfaction</keyword>
<keyword id="KW-0675">Receptor</keyword>
<keyword id="KW-1185">Reference proteome</keyword>
<keyword id="KW-0716">Sensory transduction</keyword>
<keyword id="KW-0807">Transducer</keyword>
<keyword id="KW-0812">Transmembrane</keyword>
<keyword id="KW-1133">Transmembrane helix</keyword>
<organism>
    <name type="scientific">Homo sapiens</name>
    <name type="common">Human</name>
    <dbReference type="NCBI Taxonomy" id="9606"/>
    <lineage>
        <taxon>Eukaryota</taxon>
        <taxon>Metazoa</taxon>
        <taxon>Chordata</taxon>
        <taxon>Craniata</taxon>
        <taxon>Vertebrata</taxon>
        <taxon>Euteleostomi</taxon>
        <taxon>Mammalia</taxon>
        <taxon>Eutheria</taxon>
        <taxon>Euarchontoglires</taxon>
        <taxon>Primates</taxon>
        <taxon>Haplorrhini</taxon>
        <taxon>Catarrhini</taxon>
        <taxon>Hominidae</taxon>
        <taxon>Homo</taxon>
    </lineage>
</organism>
<protein>
    <recommendedName>
        <fullName>Olfactory receptor 12D1</fullName>
    </recommendedName>
</protein>
<accession>P0DN82</accession>
<dbReference type="EMBL" id="BX248400">
    <property type="status" value="NOT_ANNOTATED_CDS"/>
    <property type="molecule type" value="Genomic_DNA"/>
</dbReference>
<dbReference type="RefSeq" id="NP_001335137.1">
    <property type="nucleotide sequence ID" value="NM_001348208.2"/>
</dbReference>
<dbReference type="SMR" id="P0DN82"/>
<dbReference type="FunCoup" id="P0DN82">
    <property type="interactions" value="416"/>
</dbReference>
<dbReference type="GlyCosmos" id="P0DN82">
    <property type="glycosylation" value="1 site, No reported glycans"/>
</dbReference>
<dbReference type="GlyGen" id="P0DN82">
    <property type="glycosylation" value="1 site"/>
</dbReference>
<dbReference type="BioMuta" id="OR12D1"/>
<dbReference type="Ensembl" id="ENST00000703726.1">
    <property type="protein sequence ID" value="ENSP00000515451.1"/>
    <property type="gene ID" value="ENSG00000249103.2"/>
</dbReference>
<dbReference type="GeneID" id="26530"/>
<dbReference type="KEGG" id="hsa:26530"/>
<dbReference type="MANE-Select" id="ENST00000703726.1">
    <property type="protein sequence ID" value="ENSP00000515451.1"/>
    <property type="RefSeq nucleotide sequence ID" value="NM_001348208.2"/>
    <property type="RefSeq protein sequence ID" value="NP_001335137.1"/>
</dbReference>
<dbReference type="AGR" id="HGNC:8177"/>
<dbReference type="CTD" id="26530"/>
<dbReference type="GeneCards" id="OR12D1"/>
<dbReference type="HGNC" id="HGNC:8177">
    <property type="gene designation" value="OR12D1"/>
</dbReference>
<dbReference type="neXtProt" id="NX_P0DN82"/>
<dbReference type="InParanoid" id="P0DN82"/>
<dbReference type="OrthoDB" id="5967130at2759"/>
<dbReference type="PAN-GO" id="P0DN82">
    <property type="GO annotations" value="4 GO annotations based on evolutionary models"/>
</dbReference>
<dbReference type="Pharos" id="P0DN82">
    <property type="development level" value="Tdark"/>
</dbReference>
<dbReference type="PRO" id="PR:P0DN82"/>
<dbReference type="Proteomes" id="UP000005640">
    <property type="component" value="Unplaced"/>
</dbReference>
<dbReference type="RNAct" id="P0DN82">
    <property type="molecule type" value="protein"/>
</dbReference>
<dbReference type="GO" id="GO:0016020">
    <property type="term" value="C:membrane"/>
    <property type="evidence" value="ECO:0000318"/>
    <property type="project" value="GO_Central"/>
</dbReference>
<dbReference type="GO" id="GO:0005886">
    <property type="term" value="C:plasma membrane"/>
    <property type="evidence" value="ECO:0007669"/>
    <property type="project" value="UniProtKB-SubCell"/>
</dbReference>
<dbReference type="GO" id="GO:0004930">
    <property type="term" value="F:G protein-coupled receptor activity"/>
    <property type="evidence" value="ECO:0007669"/>
    <property type="project" value="UniProtKB-KW"/>
</dbReference>
<dbReference type="GO" id="GO:0005549">
    <property type="term" value="F:odorant binding"/>
    <property type="evidence" value="ECO:0000318"/>
    <property type="project" value="GO_Central"/>
</dbReference>
<dbReference type="GO" id="GO:0004984">
    <property type="term" value="F:olfactory receptor activity"/>
    <property type="evidence" value="ECO:0000318"/>
    <property type="project" value="GO_Central"/>
</dbReference>
<dbReference type="GO" id="GO:0050911">
    <property type="term" value="P:detection of chemical stimulus involved in sensory perception of smell"/>
    <property type="evidence" value="ECO:0000318"/>
    <property type="project" value="GO_Central"/>
</dbReference>
<dbReference type="CDD" id="cd15915">
    <property type="entry name" value="7tmA_OR12D-like"/>
    <property type="match status" value="1"/>
</dbReference>
<dbReference type="FunFam" id="1.20.1070.10:FF:000001">
    <property type="entry name" value="Olfactory receptor"/>
    <property type="match status" value="1"/>
</dbReference>
<dbReference type="Gene3D" id="1.20.1070.10">
    <property type="entry name" value="Rhodopsin 7-helix transmembrane proteins"/>
    <property type="match status" value="1"/>
</dbReference>
<dbReference type="InterPro" id="IPR000276">
    <property type="entry name" value="GPCR_Rhodpsn"/>
</dbReference>
<dbReference type="InterPro" id="IPR017452">
    <property type="entry name" value="GPCR_Rhodpsn_7TM"/>
</dbReference>
<dbReference type="InterPro" id="IPR000725">
    <property type="entry name" value="Olfact_rcpt"/>
</dbReference>
<dbReference type="InterPro" id="IPR050516">
    <property type="entry name" value="Olfactory_GPCR"/>
</dbReference>
<dbReference type="PANTHER" id="PTHR26452">
    <property type="entry name" value="OLFACTORY RECEPTOR"/>
    <property type="match status" value="1"/>
</dbReference>
<dbReference type="Pfam" id="PF13853">
    <property type="entry name" value="7tm_4"/>
    <property type="match status" value="1"/>
</dbReference>
<dbReference type="PRINTS" id="PR00237">
    <property type="entry name" value="GPCRRHODOPSN"/>
</dbReference>
<dbReference type="PRINTS" id="PR00245">
    <property type="entry name" value="OLFACTORYR"/>
</dbReference>
<dbReference type="SUPFAM" id="SSF81321">
    <property type="entry name" value="Family A G protein-coupled receptor-like"/>
    <property type="match status" value="1"/>
</dbReference>
<dbReference type="PROSITE" id="PS00237">
    <property type="entry name" value="G_PROTEIN_RECEP_F1_1"/>
    <property type="match status" value="1"/>
</dbReference>
<dbReference type="PROSITE" id="PS50262">
    <property type="entry name" value="G_PROTEIN_RECEP_F1_2"/>
    <property type="match status" value="1"/>
</dbReference>